<evidence type="ECO:0000255" key="1">
    <source>
        <dbReference type="HAMAP-Rule" id="MF_01950"/>
    </source>
</evidence>
<keyword id="KW-0275">Fatty acid biosynthesis</keyword>
<keyword id="KW-0276">Fatty acid metabolism</keyword>
<keyword id="KW-0378">Hydrolase</keyword>
<keyword id="KW-0444">Lipid biosynthesis</keyword>
<keyword id="KW-0443">Lipid metabolism</keyword>
<comment type="function">
    <text evidence="1">Converts holo-ACP to apo-ACP by hydrolytic cleavage of the phosphopantetheine prosthetic group from ACP.</text>
</comment>
<comment type="catalytic activity">
    <reaction evidence="1">
        <text>holo-[ACP] + H2O = apo-[ACP] + (R)-4'-phosphopantetheine + H(+)</text>
        <dbReference type="Rhea" id="RHEA:20537"/>
        <dbReference type="Rhea" id="RHEA-COMP:9685"/>
        <dbReference type="Rhea" id="RHEA-COMP:9690"/>
        <dbReference type="ChEBI" id="CHEBI:15377"/>
        <dbReference type="ChEBI" id="CHEBI:15378"/>
        <dbReference type="ChEBI" id="CHEBI:29999"/>
        <dbReference type="ChEBI" id="CHEBI:61723"/>
        <dbReference type="ChEBI" id="CHEBI:64479"/>
        <dbReference type="EC" id="3.1.4.14"/>
    </reaction>
</comment>
<comment type="similarity">
    <text evidence="1">Belongs to the AcpH family.</text>
</comment>
<dbReference type="EC" id="3.1.4.14" evidence="1"/>
<dbReference type="EMBL" id="CP001138">
    <property type="protein sequence ID" value="ACH50211.1"/>
    <property type="molecule type" value="Genomic_DNA"/>
</dbReference>
<dbReference type="RefSeq" id="WP_001009860.1">
    <property type="nucleotide sequence ID" value="NC_011149.1"/>
</dbReference>
<dbReference type="SMR" id="B5EWT7"/>
<dbReference type="KEGG" id="sea:SeAg_B0442"/>
<dbReference type="HOGENOM" id="CLU_099370_1_0_6"/>
<dbReference type="Proteomes" id="UP000008819">
    <property type="component" value="Chromosome"/>
</dbReference>
<dbReference type="GO" id="GO:0008770">
    <property type="term" value="F:[acyl-carrier-protein] phosphodiesterase activity"/>
    <property type="evidence" value="ECO:0007669"/>
    <property type="project" value="UniProtKB-UniRule"/>
</dbReference>
<dbReference type="GO" id="GO:0006633">
    <property type="term" value="P:fatty acid biosynthetic process"/>
    <property type="evidence" value="ECO:0007669"/>
    <property type="project" value="UniProtKB-UniRule"/>
</dbReference>
<dbReference type="HAMAP" id="MF_01950">
    <property type="entry name" value="AcpH"/>
    <property type="match status" value="1"/>
</dbReference>
<dbReference type="InterPro" id="IPR007431">
    <property type="entry name" value="ACP_PD"/>
</dbReference>
<dbReference type="InterPro" id="IPR023491">
    <property type="entry name" value="ACP_phosphodiesterase_gpbac"/>
</dbReference>
<dbReference type="NCBIfam" id="NF007466">
    <property type="entry name" value="PRK10045.1"/>
    <property type="match status" value="1"/>
</dbReference>
<dbReference type="PANTHER" id="PTHR38764">
    <property type="entry name" value="ACYL CARRIER PROTEIN PHOSPHODIESTERASE"/>
    <property type="match status" value="1"/>
</dbReference>
<dbReference type="PANTHER" id="PTHR38764:SF1">
    <property type="entry name" value="ACYL CARRIER PROTEIN PHOSPHODIESTERASE"/>
    <property type="match status" value="1"/>
</dbReference>
<dbReference type="Pfam" id="PF04336">
    <property type="entry name" value="ACP_PD"/>
    <property type="match status" value="1"/>
</dbReference>
<dbReference type="PIRSF" id="PIRSF011489">
    <property type="entry name" value="DUF479"/>
    <property type="match status" value="1"/>
</dbReference>
<name>ACPH_SALA4</name>
<accession>B5EWT7</accession>
<proteinExistence type="inferred from homology"/>
<protein>
    <recommendedName>
        <fullName evidence="1">Acyl carrier protein phosphodiesterase</fullName>
        <shortName evidence="1">ACP phosphodiesterase</shortName>
        <ecNumber evidence="1">3.1.4.14</ecNumber>
    </recommendedName>
</protein>
<feature type="chain" id="PRO_1000188810" description="Acyl carrier protein phosphodiesterase">
    <location>
        <begin position="1"/>
        <end position="193"/>
    </location>
</feature>
<reference key="1">
    <citation type="journal article" date="2011" name="J. Bacteriol.">
        <title>Comparative genomics of 28 Salmonella enterica isolates: evidence for CRISPR-mediated adaptive sublineage evolution.</title>
        <authorList>
            <person name="Fricke W.F."/>
            <person name="Mammel M.K."/>
            <person name="McDermott P.F."/>
            <person name="Tartera C."/>
            <person name="White D.G."/>
            <person name="Leclerc J.E."/>
            <person name="Ravel J."/>
            <person name="Cebula T.A."/>
        </authorList>
    </citation>
    <scope>NUCLEOTIDE SEQUENCE [LARGE SCALE GENOMIC DNA]</scope>
    <source>
        <strain>SL483</strain>
    </source>
</reference>
<gene>
    <name evidence="1" type="primary">acpH</name>
    <name type="ordered locus">SeAg_B0442</name>
</gene>
<organism>
    <name type="scientific">Salmonella agona (strain SL483)</name>
    <dbReference type="NCBI Taxonomy" id="454166"/>
    <lineage>
        <taxon>Bacteria</taxon>
        <taxon>Pseudomonadati</taxon>
        <taxon>Pseudomonadota</taxon>
        <taxon>Gammaproteobacteria</taxon>
        <taxon>Enterobacterales</taxon>
        <taxon>Enterobacteriaceae</taxon>
        <taxon>Salmonella</taxon>
    </lineage>
</organism>
<sequence length="193" mass="22907">MNFLAHLHLAHLADSSLSGNLLADFVRGNPATHYPPDVVEGIYMHRRIDVMTDNLPEVREAREWFRHETRRVASITLDVMWDHFLSRHWTQISPDFPLQAFVGYAHAQVATILPDSPPRFVNLNDYLWSEKWLERYRDMDFIQNVLNGMANRRPRLDALRDSWYDLDAHYDALEERFWHFYPRMMAQAARKAL</sequence>